<accession>P60986</accession>
<feature type="signal peptide" evidence="1">
    <location>
        <begin position="1"/>
        <end position="28"/>
    </location>
</feature>
<feature type="chain" id="PRO_0000024286" description="Prolactin-inducible protein homolog">
    <location>
        <begin position="29"/>
        <end position="145"/>
    </location>
</feature>
<feature type="modified residue" description="Pyrrolidone carboxylic acid" evidence="2">
    <location>
        <position position="29"/>
    </location>
</feature>
<feature type="glycosylation site" description="N-linked (GlcNAc...) asparagine" evidence="3">
    <location>
        <position position="106"/>
    </location>
</feature>
<feature type="disulfide bond" evidence="1">
    <location>
        <begin position="66"/>
        <end position="92"/>
    </location>
</feature>
<feature type="disulfide bond" evidence="1">
    <location>
        <begin position="90"/>
        <end position="124"/>
    </location>
</feature>
<organism>
    <name type="scientific">Bos taurus</name>
    <name type="common">Bovine</name>
    <dbReference type="NCBI Taxonomy" id="9913"/>
    <lineage>
        <taxon>Eukaryota</taxon>
        <taxon>Metazoa</taxon>
        <taxon>Chordata</taxon>
        <taxon>Craniata</taxon>
        <taxon>Vertebrata</taxon>
        <taxon>Euteleostomi</taxon>
        <taxon>Mammalia</taxon>
        <taxon>Eutheria</taxon>
        <taxon>Laurasiatheria</taxon>
        <taxon>Artiodactyla</taxon>
        <taxon>Ruminantia</taxon>
        <taxon>Pecora</taxon>
        <taxon>Bovidae</taxon>
        <taxon>Bovinae</taxon>
        <taxon>Bos</taxon>
    </lineage>
</organism>
<comment type="subunit">
    <text evidence="1">Monomer. Interacts with AZGP1 (By similarity).</text>
</comment>
<comment type="subcellular location">
    <subcellularLocation>
        <location evidence="1">Secreted</location>
    </subcellularLocation>
</comment>
<comment type="similarity">
    <text evidence="4">Belongs to the PIP family.</text>
</comment>
<dbReference type="EMBL" id="AB098480">
    <property type="protein sequence ID" value="BAD04928.1"/>
    <property type="molecule type" value="Genomic_DNA"/>
</dbReference>
<dbReference type="RefSeq" id="NP_001074382.1">
    <property type="nucleotide sequence ID" value="NM_001080913.1"/>
</dbReference>
<dbReference type="RefSeq" id="XP_010802934.1">
    <property type="nucleotide sequence ID" value="XM_010804632.1"/>
</dbReference>
<dbReference type="SMR" id="P60986"/>
<dbReference type="FunCoup" id="P60986">
    <property type="interactions" value="27"/>
</dbReference>
<dbReference type="STRING" id="9913.ENSBTAP00000008743"/>
<dbReference type="GlyCosmos" id="P60986">
    <property type="glycosylation" value="1 site, No reported glycans"/>
</dbReference>
<dbReference type="GlyGen" id="P60986">
    <property type="glycosylation" value="1 site"/>
</dbReference>
<dbReference type="PaxDb" id="9913-ENSBTAP00000008743"/>
<dbReference type="GeneID" id="613853"/>
<dbReference type="KEGG" id="bta:613853"/>
<dbReference type="CTD" id="5304"/>
<dbReference type="InParanoid" id="P60986"/>
<dbReference type="OrthoDB" id="9835042at2759"/>
<dbReference type="Proteomes" id="UP000009136">
    <property type="component" value="Unplaced"/>
</dbReference>
<dbReference type="GO" id="GO:0005615">
    <property type="term" value="C:extracellular space"/>
    <property type="evidence" value="ECO:0000318"/>
    <property type="project" value="GO_Central"/>
</dbReference>
<dbReference type="GO" id="GO:0004190">
    <property type="term" value="F:aspartic-type endopeptidase activity"/>
    <property type="evidence" value="ECO:0000318"/>
    <property type="project" value="GO_Central"/>
</dbReference>
<dbReference type="GO" id="GO:0006508">
    <property type="term" value="P:proteolysis"/>
    <property type="evidence" value="ECO:0000318"/>
    <property type="project" value="GO_Central"/>
</dbReference>
<dbReference type="GO" id="GO:0002682">
    <property type="term" value="P:regulation of immune system process"/>
    <property type="evidence" value="ECO:0000318"/>
    <property type="project" value="GO_Central"/>
</dbReference>
<dbReference type="FunFam" id="2.60.40.10:FF:001572">
    <property type="entry name" value="Prolactin-inducible protein homolog"/>
    <property type="match status" value="1"/>
</dbReference>
<dbReference type="Gene3D" id="2.60.40.10">
    <property type="entry name" value="Immunoglobulins"/>
    <property type="match status" value="1"/>
</dbReference>
<dbReference type="InterPro" id="IPR013783">
    <property type="entry name" value="Ig-like_fold"/>
</dbReference>
<dbReference type="InterPro" id="IPR014756">
    <property type="entry name" value="Ig_E-set"/>
</dbReference>
<dbReference type="InterPro" id="IPR007990">
    <property type="entry name" value="PIP"/>
</dbReference>
<dbReference type="PANTHER" id="PTHR15096:SF5">
    <property type="entry name" value="PROLACTIN-INDUCIBLE PROTEIN"/>
    <property type="match status" value="1"/>
</dbReference>
<dbReference type="PANTHER" id="PTHR15096">
    <property type="entry name" value="PROLACTIN-INDUCIBLE PROTEIN/SEMINAL VESICLE ANTIGEN"/>
    <property type="match status" value="1"/>
</dbReference>
<dbReference type="Pfam" id="PF05326">
    <property type="entry name" value="SVA"/>
    <property type="match status" value="1"/>
</dbReference>
<dbReference type="PIRSF" id="PIRSF002572">
    <property type="entry name" value="PIP-GCDFP-15"/>
    <property type="match status" value="1"/>
</dbReference>
<dbReference type="SUPFAM" id="SSF81296">
    <property type="entry name" value="E set domains"/>
    <property type="match status" value="1"/>
</dbReference>
<name>PIP_BOVIN</name>
<gene>
    <name type="primary">PIP</name>
</gene>
<evidence type="ECO:0000250" key="1"/>
<evidence type="ECO:0000250" key="2">
    <source>
        <dbReference type="UniProtKB" id="P12273"/>
    </source>
</evidence>
<evidence type="ECO:0000255" key="3"/>
<evidence type="ECO:0000305" key="4"/>
<keyword id="KW-1015">Disulfide bond</keyword>
<keyword id="KW-0325">Glycoprotein</keyword>
<keyword id="KW-0873">Pyrrolidone carboxylic acid</keyword>
<keyword id="KW-1185">Reference proteome</keyword>
<keyword id="KW-0964">Secreted</keyword>
<keyword id="KW-0732">Signal</keyword>
<protein>
    <recommendedName>
        <fullName>Prolactin-inducible protein homolog</fullName>
    </recommendedName>
    <alternativeName>
        <fullName>Prolactin-induced protein</fullName>
    </alternativeName>
</protein>
<proteinExistence type="inferred from homology"/>
<sequence>MYSLHLLLRASPAALLLILCLQLGTTKAQEDTTSRQLMTMDLQMLQIDTSEEATVVLEVSTDLRECMVVKAYLLSNIPIEGNFNYKFTSCLCNNYPRRFFWDLQTNSTVRITAVVDVIRELGICPDDWAVIPIKANRFSITKSLP</sequence>
<reference key="1">
    <citation type="journal article" date="2004" name="Gene">
        <title>Divergent evolution of the prolactin-inducible protein gene and related genes in the mouse genome.</title>
        <authorList>
            <person name="Osawa M."/>
            <person name="Horiuchi H."/>
            <person name="Tian W."/>
            <person name="Kaneko M."/>
        </authorList>
    </citation>
    <scope>NUCLEOTIDE SEQUENCE [GENOMIC DNA]</scope>
</reference>